<feature type="chain" id="PRO_0000260639" description="1,4-alpha-glucan branching enzyme GlgB">
    <location>
        <begin position="1"/>
        <end position="735"/>
    </location>
</feature>
<feature type="active site" description="Nucleophile" evidence="1">
    <location>
        <position position="414"/>
    </location>
</feature>
<feature type="active site" description="Proton donor" evidence="1">
    <location>
        <position position="469"/>
    </location>
</feature>
<accession>Q39N89</accession>
<organism>
    <name type="scientific">Burkholderia lata (strain ATCC 17760 / DSM 23089 / LMG 22485 / NCIMB 9086 / R18194 / 383)</name>
    <dbReference type="NCBI Taxonomy" id="482957"/>
    <lineage>
        <taxon>Bacteria</taxon>
        <taxon>Pseudomonadati</taxon>
        <taxon>Pseudomonadota</taxon>
        <taxon>Betaproteobacteria</taxon>
        <taxon>Burkholderiales</taxon>
        <taxon>Burkholderiaceae</taxon>
        <taxon>Burkholderia</taxon>
        <taxon>Burkholderia cepacia complex</taxon>
    </lineage>
</organism>
<proteinExistence type="inferred from homology"/>
<reference key="1">
    <citation type="submission" date="2005-10" db="EMBL/GenBank/DDBJ databases">
        <title>Complete sequence of chromosome 3 of Burkholderia sp. 383.</title>
        <authorList>
            <consortium name="US DOE Joint Genome Institute"/>
            <person name="Copeland A."/>
            <person name="Lucas S."/>
            <person name="Lapidus A."/>
            <person name="Barry K."/>
            <person name="Detter J.C."/>
            <person name="Glavina T."/>
            <person name="Hammon N."/>
            <person name="Israni S."/>
            <person name="Pitluck S."/>
            <person name="Chain P."/>
            <person name="Malfatti S."/>
            <person name="Shin M."/>
            <person name="Vergez L."/>
            <person name="Schmutz J."/>
            <person name="Larimer F."/>
            <person name="Land M."/>
            <person name="Kyrpides N."/>
            <person name="Lykidis A."/>
            <person name="Richardson P."/>
        </authorList>
    </citation>
    <scope>NUCLEOTIDE SEQUENCE [LARGE SCALE GENOMIC DNA]</scope>
    <source>
        <strain>ATCC 17760 / DSM 23089 / LMG 22485 / NCIMB 9086 / R18194 / 383</strain>
    </source>
</reference>
<name>GLGB_BURL3</name>
<protein>
    <recommendedName>
        <fullName evidence="1">1,4-alpha-glucan branching enzyme GlgB</fullName>
        <ecNumber evidence="1">2.4.1.18</ecNumber>
    </recommendedName>
    <alternativeName>
        <fullName evidence="1">1,4-alpha-D-glucan:1,4-alpha-D-glucan 6-glucosyl-transferase</fullName>
    </alternativeName>
    <alternativeName>
        <fullName evidence="1">Alpha-(1-&gt;4)-glucan branching enzyme</fullName>
    </alternativeName>
    <alternativeName>
        <fullName evidence="1">Glycogen branching enzyme</fullName>
        <shortName evidence="1">BE</shortName>
    </alternativeName>
</protein>
<evidence type="ECO:0000255" key="1">
    <source>
        <dbReference type="HAMAP-Rule" id="MF_00685"/>
    </source>
</evidence>
<gene>
    <name evidence="1" type="primary">glgB</name>
    <name type="ordered locus">Bcep18194_C7032</name>
</gene>
<comment type="function">
    <text evidence="1">Catalyzes the formation of the alpha-1,6-glucosidic linkages in glycogen by scission of a 1,4-alpha-linked oligosaccharide from growing alpha-1,4-glucan chains and the subsequent attachment of the oligosaccharide to the alpha-1,6 position.</text>
</comment>
<comment type="catalytic activity">
    <reaction evidence="1">
        <text>Transfers a segment of a (1-&gt;4)-alpha-D-glucan chain to a primary hydroxy group in a similar glucan chain.</text>
        <dbReference type="EC" id="2.4.1.18"/>
    </reaction>
</comment>
<comment type="pathway">
    <text evidence="1">Glycan biosynthesis; glycogen biosynthesis.</text>
</comment>
<comment type="subunit">
    <text evidence="1">Monomer.</text>
</comment>
<comment type="similarity">
    <text evidence="1">Belongs to the glycosyl hydrolase 13 family. GlgB subfamily.</text>
</comment>
<dbReference type="EC" id="2.4.1.18" evidence="1"/>
<dbReference type="EMBL" id="CP000150">
    <property type="protein sequence ID" value="ABB06077.1"/>
    <property type="molecule type" value="Genomic_DNA"/>
</dbReference>
<dbReference type="RefSeq" id="WP_011349721.1">
    <property type="nucleotide sequence ID" value="NC_007509.1"/>
</dbReference>
<dbReference type="SMR" id="Q39N89"/>
<dbReference type="CAZy" id="CBM48">
    <property type="family name" value="Carbohydrate-Binding Module Family 48"/>
</dbReference>
<dbReference type="CAZy" id="GH13">
    <property type="family name" value="Glycoside Hydrolase Family 13"/>
</dbReference>
<dbReference type="GeneID" id="45092433"/>
<dbReference type="KEGG" id="bur:Bcep18194_C7032"/>
<dbReference type="PATRIC" id="fig|482957.22.peg.7582"/>
<dbReference type="HOGENOM" id="CLU_004245_3_2_4"/>
<dbReference type="UniPathway" id="UPA00164"/>
<dbReference type="Proteomes" id="UP000002705">
    <property type="component" value="Chromosome 3"/>
</dbReference>
<dbReference type="GO" id="GO:0005829">
    <property type="term" value="C:cytosol"/>
    <property type="evidence" value="ECO:0007669"/>
    <property type="project" value="TreeGrafter"/>
</dbReference>
<dbReference type="GO" id="GO:0003844">
    <property type="term" value="F:1,4-alpha-glucan branching enzyme activity"/>
    <property type="evidence" value="ECO:0007669"/>
    <property type="project" value="UniProtKB-UniRule"/>
</dbReference>
<dbReference type="GO" id="GO:0043169">
    <property type="term" value="F:cation binding"/>
    <property type="evidence" value="ECO:0007669"/>
    <property type="project" value="InterPro"/>
</dbReference>
<dbReference type="GO" id="GO:0004553">
    <property type="term" value="F:hydrolase activity, hydrolyzing O-glycosyl compounds"/>
    <property type="evidence" value="ECO:0007669"/>
    <property type="project" value="InterPro"/>
</dbReference>
<dbReference type="GO" id="GO:0005978">
    <property type="term" value="P:glycogen biosynthetic process"/>
    <property type="evidence" value="ECO:0007669"/>
    <property type="project" value="UniProtKB-UniRule"/>
</dbReference>
<dbReference type="CDD" id="cd11322">
    <property type="entry name" value="AmyAc_Glg_BE"/>
    <property type="match status" value="1"/>
</dbReference>
<dbReference type="CDD" id="cd02855">
    <property type="entry name" value="E_set_GBE_prok_N"/>
    <property type="match status" value="1"/>
</dbReference>
<dbReference type="FunFam" id="2.60.40.10:FF:000169">
    <property type="entry name" value="1,4-alpha-glucan branching enzyme GlgB"/>
    <property type="match status" value="1"/>
</dbReference>
<dbReference type="FunFam" id="2.60.40.1180:FF:000002">
    <property type="entry name" value="1,4-alpha-glucan branching enzyme GlgB"/>
    <property type="match status" value="1"/>
</dbReference>
<dbReference type="FunFam" id="3.20.20.80:FF:000003">
    <property type="entry name" value="1,4-alpha-glucan branching enzyme GlgB"/>
    <property type="match status" value="1"/>
</dbReference>
<dbReference type="Gene3D" id="3.20.20.80">
    <property type="entry name" value="Glycosidases"/>
    <property type="match status" value="1"/>
</dbReference>
<dbReference type="Gene3D" id="2.60.40.1180">
    <property type="entry name" value="Golgi alpha-mannosidase II"/>
    <property type="match status" value="1"/>
</dbReference>
<dbReference type="Gene3D" id="2.60.40.10">
    <property type="entry name" value="Immunoglobulins"/>
    <property type="match status" value="1"/>
</dbReference>
<dbReference type="HAMAP" id="MF_00685">
    <property type="entry name" value="GlgB"/>
    <property type="match status" value="1"/>
</dbReference>
<dbReference type="InterPro" id="IPR006048">
    <property type="entry name" value="A-amylase/branching_C"/>
</dbReference>
<dbReference type="InterPro" id="IPR037439">
    <property type="entry name" value="Branching_enzy"/>
</dbReference>
<dbReference type="InterPro" id="IPR006407">
    <property type="entry name" value="GlgB"/>
</dbReference>
<dbReference type="InterPro" id="IPR054169">
    <property type="entry name" value="GlgB_N"/>
</dbReference>
<dbReference type="InterPro" id="IPR044143">
    <property type="entry name" value="GlgB_N_E_set_prok"/>
</dbReference>
<dbReference type="InterPro" id="IPR006047">
    <property type="entry name" value="Glyco_hydro_13_cat_dom"/>
</dbReference>
<dbReference type="InterPro" id="IPR004193">
    <property type="entry name" value="Glyco_hydro_13_N"/>
</dbReference>
<dbReference type="InterPro" id="IPR013780">
    <property type="entry name" value="Glyco_hydro_b"/>
</dbReference>
<dbReference type="InterPro" id="IPR017853">
    <property type="entry name" value="Glycoside_hydrolase_SF"/>
</dbReference>
<dbReference type="InterPro" id="IPR013783">
    <property type="entry name" value="Ig-like_fold"/>
</dbReference>
<dbReference type="InterPro" id="IPR014756">
    <property type="entry name" value="Ig_E-set"/>
</dbReference>
<dbReference type="NCBIfam" id="TIGR01515">
    <property type="entry name" value="branching_enzym"/>
    <property type="match status" value="1"/>
</dbReference>
<dbReference type="NCBIfam" id="NF003811">
    <property type="entry name" value="PRK05402.1"/>
    <property type="match status" value="1"/>
</dbReference>
<dbReference type="NCBIfam" id="NF008967">
    <property type="entry name" value="PRK12313.1"/>
    <property type="match status" value="1"/>
</dbReference>
<dbReference type="PANTHER" id="PTHR43651">
    <property type="entry name" value="1,4-ALPHA-GLUCAN-BRANCHING ENZYME"/>
    <property type="match status" value="1"/>
</dbReference>
<dbReference type="PANTHER" id="PTHR43651:SF3">
    <property type="entry name" value="1,4-ALPHA-GLUCAN-BRANCHING ENZYME"/>
    <property type="match status" value="1"/>
</dbReference>
<dbReference type="Pfam" id="PF02806">
    <property type="entry name" value="Alpha-amylase_C"/>
    <property type="match status" value="1"/>
</dbReference>
<dbReference type="Pfam" id="PF02922">
    <property type="entry name" value="CBM_48"/>
    <property type="match status" value="1"/>
</dbReference>
<dbReference type="Pfam" id="PF22019">
    <property type="entry name" value="GlgB_N"/>
    <property type="match status" value="1"/>
</dbReference>
<dbReference type="PIRSF" id="PIRSF000463">
    <property type="entry name" value="GlgB"/>
    <property type="match status" value="1"/>
</dbReference>
<dbReference type="SMART" id="SM00642">
    <property type="entry name" value="Aamy"/>
    <property type="match status" value="1"/>
</dbReference>
<dbReference type="SUPFAM" id="SSF51445">
    <property type="entry name" value="(Trans)glycosidases"/>
    <property type="match status" value="1"/>
</dbReference>
<dbReference type="SUPFAM" id="SSF81296">
    <property type="entry name" value="E set domains"/>
    <property type="match status" value="1"/>
</dbReference>
<dbReference type="SUPFAM" id="SSF51011">
    <property type="entry name" value="Glycosyl hydrolase domain"/>
    <property type="match status" value="1"/>
</dbReference>
<keyword id="KW-0119">Carbohydrate metabolism</keyword>
<keyword id="KW-0320">Glycogen biosynthesis</keyword>
<keyword id="KW-0321">Glycogen metabolism</keyword>
<keyword id="KW-0328">Glycosyltransferase</keyword>
<keyword id="KW-0808">Transferase</keyword>
<sequence length="735" mass="80677">MTDTLFERSDIDALLAGRHPDPFACLGPHGQTGQVVVRAVLPGAKSVHALSPEGAELGTLACVDRAGCFAGTIPRNGGAPHYLLAIDWPDARQVIDDAYAFGTLLDDAVLARFSAGDPAAVLDCLGATPARIDDTDGVRFAVWAPNAQRVSVVGDFNGWDGRRHPMRLRRPSGVWELFVPGIGAGECYKYELRAADGRVLPHKSDPCARATEAPPRTASVVADVAALDAFAWHDEGWMHARPRADRYRVPWSIYEVHAESWQRVPEEMNRSATWDELAERLIPYVQGMGFTHVEFMPIAEYPFGGSWGYQPVAQFAPSARFGPVDGFARFVDRAHAAGIGVLVDWVPAHFPDDPHGLAQFDGTALYEHADPREGLHPDWHTCVFNVGRTEVGAFLAASALAWARRYHVDGIRVDAVASMLYRDYSRAEGEWVPNVHGGRENLESVAFLRMLNDTLHGAAAPAGVVTVAEESTAWPGVTAPTGDGGLGFDFKWNMGWMHDTLAYVREDPVHRRYHHDRMTFGLVYAFSERFVLPLSHDEVVHGKGSLVAKMPGDAWQRLATLRAYFGFMWAHPGKKLLFMGSEFAQWAEFAHDATPHWDLLDAPAHRGVQRLVRDLNRTYAAEPALHALDCHAAGFSWLIGDDRDNSVFAFARRDEAGHLVVAICNFTPVPRASYRVGLPAPGQWRELMNTDAAPYGGTNAGNDGAVWAEAVPAHGEAWSALLRLPPLATLWLRPA</sequence>